<reference key="1">
    <citation type="submission" date="2009-01" db="EMBL/GenBank/DDBJ databases">
        <title>Complete sequence of chromosome of Caldicellulosiruptor becscii DSM 6725.</title>
        <authorList>
            <person name="Lucas S."/>
            <person name="Copeland A."/>
            <person name="Lapidus A."/>
            <person name="Glavina del Rio T."/>
            <person name="Tice H."/>
            <person name="Bruce D."/>
            <person name="Goodwin L."/>
            <person name="Pitluck S."/>
            <person name="Sims D."/>
            <person name="Meincke L."/>
            <person name="Brettin T."/>
            <person name="Detter J.C."/>
            <person name="Han C."/>
            <person name="Larimer F."/>
            <person name="Land M."/>
            <person name="Hauser L."/>
            <person name="Kyrpides N."/>
            <person name="Ovchinnikova G."/>
            <person name="Kataeva I."/>
            <person name="Adams M.W.W."/>
        </authorList>
    </citation>
    <scope>NUCLEOTIDE SEQUENCE [LARGE SCALE GENOMIC DNA]</scope>
    <source>
        <strain>ATCC BAA-1888 / DSM 6725 / KCTC 15123 / Z-1320</strain>
    </source>
</reference>
<sequence length="197" mass="22350">MIDSIVGIIQEVFSNYVILNYNNLYIKIFCNSTKFSEFLGKEKRVYVSLKFNENLSELECYGFLTREERELFLKLQKVTGVGSKLALQILSSIDFQELIVEIAKGNVAKLEKVKGIGKKTASRIILELKETLKKEFKVASTSGKEEKTYEKLEEISLALLSLGYDIDEVNQVLSSEDFSELSLEDGIKLALKKLSKI</sequence>
<gene>
    <name evidence="1" type="primary">ruvA</name>
    <name type="ordered locus">Athe_1115</name>
</gene>
<comment type="function">
    <text evidence="1">The RuvA-RuvB-RuvC complex processes Holliday junction (HJ) DNA during genetic recombination and DNA repair, while the RuvA-RuvB complex plays an important role in the rescue of blocked DNA replication forks via replication fork reversal (RFR). RuvA specifically binds to HJ cruciform DNA, conferring on it an open structure. The RuvB hexamer acts as an ATP-dependent pump, pulling dsDNA into and through the RuvAB complex. HJ branch migration allows RuvC to scan DNA until it finds its consensus sequence, where it cleaves and resolves the cruciform DNA.</text>
</comment>
<comment type="subunit">
    <text evidence="1">Homotetramer. Forms an RuvA(8)-RuvB(12)-Holliday junction (HJ) complex. HJ DNA is sandwiched between 2 RuvA tetramers; dsDNA enters through RuvA and exits via RuvB. An RuvB hexamer assembles on each DNA strand where it exits the tetramer. Each RuvB hexamer is contacted by two RuvA subunits (via domain III) on 2 adjacent RuvB subunits; this complex drives branch migration. In the full resolvosome a probable DNA-RuvA(4)-RuvB(12)-RuvC(2) complex forms which resolves the HJ.</text>
</comment>
<comment type="subcellular location">
    <subcellularLocation>
        <location evidence="1">Cytoplasm</location>
    </subcellularLocation>
</comment>
<comment type="domain">
    <text evidence="1">Has three domains with a flexible linker between the domains II and III and assumes an 'L' shape. Domain III is highly mobile and contacts RuvB.</text>
</comment>
<comment type="similarity">
    <text evidence="1">Belongs to the RuvA family.</text>
</comment>
<proteinExistence type="inferred from homology"/>
<feature type="chain" id="PRO_1000195108" description="Holliday junction branch migration complex subunit RuvA">
    <location>
        <begin position="1"/>
        <end position="197"/>
    </location>
</feature>
<feature type="region of interest" description="Domain I" evidence="1">
    <location>
        <begin position="1"/>
        <end position="64"/>
    </location>
</feature>
<feature type="region of interest" description="Domain II" evidence="1">
    <location>
        <begin position="65"/>
        <end position="143"/>
    </location>
</feature>
<feature type="region of interest" description="Flexible linker" evidence="1">
    <location>
        <begin position="144"/>
        <end position="152"/>
    </location>
</feature>
<feature type="region of interest" description="Domain III" evidence="1">
    <location>
        <begin position="152"/>
        <end position="197"/>
    </location>
</feature>
<name>RUVA_CALBD</name>
<dbReference type="EMBL" id="CP001393">
    <property type="protein sequence ID" value="ACM60216.1"/>
    <property type="molecule type" value="Genomic_DNA"/>
</dbReference>
<dbReference type="RefSeq" id="WP_015907619.1">
    <property type="nucleotide sequence ID" value="NC_012034.1"/>
</dbReference>
<dbReference type="SMR" id="B9MRB2"/>
<dbReference type="STRING" id="521460.Athe_1115"/>
<dbReference type="GeneID" id="31772465"/>
<dbReference type="KEGG" id="ate:Athe_1115"/>
<dbReference type="eggNOG" id="COG0632">
    <property type="taxonomic scope" value="Bacteria"/>
</dbReference>
<dbReference type="HOGENOM" id="CLU_087936_3_0_9"/>
<dbReference type="Proteomes" id="UP000007723">
    <property type="component" value="Chromosome"/>
</dbReference>
<dbReference type="GO" id="GO:0005737">
    <property type="term" value="C:cytoplasm"/>
    <property type="evidence" value="ECO:0007669"/>
    <property type="project" value="UniProtKB-SubCell"/>
</dbReference>
<dbReference type="GO" id="GO:0009379">
    <property type="term" value="C:Holliday junction helicase complex"/>
    <property type="evidence" value="ECO:0007669"/>
    <property type="project" value="InterPro"/>
</dbReference>
<dbReference type="GO" id="GO:0048476">
    <property type="term" value="C:Holliday junction resolvase complex"/>
    <property type="evidence" value="ECO:0007669"/>
    <property type="project" value="UniProtKB-UniRule"/>
</dbReference>
<dbReference type="GO" id="GO:0005524">
    <property type="term" value="F:ATP binding"/>
    <property type="evidence" value="ECO:0007669"/>
    <property type="project" value="InterPro"/>
</dbReference>
<dbReference type="GO" id="GO:0000400">
    <property type="term" value="F:four-way junction DNA binding"/>
    <property type="evidence" value="ECO:0007669"/>
    <property type="project" value="UniProtKB-UniRule"/>
</dbReference>
<dbReference type="GO" id="GO:0009378">
    <property type="term" value="F:four-way junction helicase activity"/>
    <property type="evidence" value="ECO:0007669"/>
    <property type="project" value="InterPro"/>
</dbReference>
<dbReference type="GO" id="GO:0006310">
    <property type="term" value="P:DNA recombination"/>
    <property type="evidence" value="ECO:0007669"/>
    <property type="project" value="UniProtKB-UniRule"/>
</dbReference>
<dbReference type="GO" id="GO:0006281">
    <property type="term" value="P:DNA repair"/>
    <property type="evidence" value="ECO:0007669"/>
    <property type="project" value="UniProtKB-UniRule"/>
</dbReference>
<dbReference type="CDD" id="cd14332">
    <property type="entry name" value="UBA_RuvA_C"/>
    <property type="match status" value="1"/>
</dbReference>
<dbReference type="Gene3D" id="1.10.150.20">
    <property type="entry name" value="5' to 3' exonuclease, C-terminal subdomain"/>
    <property type="match status" value="1"/>
</dbReference>
<dbReference type="Gene3D" id="2.40.50.140">
    <property type="entry name" value="Nucleic acid-binding proteins"/>
    <property type="match status" value="1"/>
</dbReference>
<dbReference type="HAMAP" id="MF_00031">
    <property type="entry name" value="DNA_HJ_migration_RuvA"/>
    <property type="match status" value="1"/>
</dbReference>
<dbReference type="InterPro" id="IPR013849">
    <property type="entry name" value="DNA_helicase_Holl-junc_RuvA_I"/>
</dbReference>
<dbReference type="InterPro" id="IPR003583">
    <property type="entry name" value="Hlx-hairpin-Hlx_DNA-bd_motif"/>
</dbReference>
<dbReference type="InterPro" id="IPR012340">
    <property type="entry name" value="NA-bd_OB-fold"/>
</dbReference>
<dbReference type="InterPro" id="IPR000085">
    <property type="entry name" value="RuvA"/>
</dbReference>
<dbReference type="InterPro" id="IPR010994">
    <property type="entry name" value="RuvA_2-like"/>
</dbReference>
<dbReference type="InterPro" id="IPR011114">
    <property type="entry name" value="RuvA_C"/>
</dbReference>
<dbReference type="InterPro" id="IPR036267">
    <property type="entry name" value="RuvA_C_sf"/>
</dbReference>
<dbReference type="NCBIfam" id="TIGR00084">
    <property type="entry name" value="ruvA"/>
    <property type="match status" value="1"/>
</dbReference>
<dbReference type="Pfam" id="PF14520">
    <property type="entry name" value="HHH_5"/>
    <property type="match status" value="1"/>
</dbReference>
<dbReference type="Pfam" id="PF07499">
    <property type="entry name" value="RuvA_C"/>
    <property type="match status" value="1"/>
</dbReference>
<dbReference type="Pfam" id="PF01330">
    <property type="entry name" value="RuvA_N"/>
    <property type="match status" value="1"/>
</dbReference>
<dbReference type="SMART" id="SM00278">
    <property type="entry name" value="HhH1"/>
    <property type="match status" value="2"/>
</dbReference>
<dbReference type="SUPFAM" id="SSF46929">
    <property type="entry name" value="DNA helicase RuvA subunit, C-terminal domain"/>
    <property type="match status" value="1"/>
</dbReference>
<dbReference type="SUPFAM" id="SSF47781">
    <property type="entry name" value="RuvA domain 2-like"/>
    <property type="match status" value="1"/>
</dbReference>
<keyword id="KW-0963">Cytoplasm</keyword>
<keyword id="KW-0227">DNA damage</keyword>
<keyword id="KW-0233">DNA recombination</keyword>
<keyword id="KW-0234">DNA repair</keyword>
<keyword id="KW-0238">DNA-binding</keyword>
<protein>
    <recommendedName>
        <fullName evidence="1">Holliday junction branch migration complex subunit RuvA</fullName>
    </recommendedName>
</protein>
<organism>
    <name type="scientific">Caldicellulosiruptor bescii (strain ATCC BAA-1888 / DSM 6725 / KCTC 15123 / Z-1320)</name>
    <name type="common">Anaerocellum thermophilum</name>
    <dbReference type="NCBI Taxonomy" id="521460"/>
    <lineage>
        <taxon>Bacteria</taxon>
        <taxon>Bacillati</taxon>
        <taxon>Bacillota</taxon>
        <taxon>Bacillota incertae sedis</taxon>
        <taxon>Caldicellulosiruptorales</taxon>
        <taxon>Caldicellulosiruptoraceae</taxon>
        <taxon>Caldicellulosiruptor</taxon>
    </lineage>
</organism>
<accession>B9MRB2</accession>
<evidence type="ECO:0000255" key="1">
    <source>
        <dbReference type="HAMAP-Rule" id="MF_00031"/>
    </source>
</evidence>